<protein>
    <recommendedName>
        <fullName evidence="1">Adenosylhomocysteinase</fullName>
        <ecNumber evidence="1">3.13.2.1</ecNumber>
    </recommendedName>
    <alternativeName>
        <fullName evidence="1">S-adenosyl-L-homocysteine hydrolase</fullName>
        <shortName evidence="1">AdoHcyase</shortName>
    </alternativeName>
</protein>
<reference key="1">
    <citation type="journal article" date="2002" name="Nature">
        <title>Complete genome sequence of the model actinomycete Streptomyces coelicolor A3(2).</title>
        <authorList>
            <person name="Bentley S.D."/>
            <person name="Chater K.F."/>
            <person name="Cerdeno-Tarraga A.-M."/>
            <person name="Challis G.L."/>
            <person name="Thomson N.R."/>
            <person name="James K.D."/>
            <person name="Harris D.E."/>
            <person name="Quail M.A."/>
            <person name="Kieser H."/>
            <person name="Harper D."/>
            <person name="Bateman A."/>
            <person name="Brown S."/>
            <person name="Chandra G."/>
            <person name="Chen C.W."/>
            <person name="Collins M."/>
            <person name="Cronin A."/>
            <person name="Fraser A."/>
            <person name="Goble A."/>
            <person name="Hidalgo J."/>
            <person name="Hornsby T."/>
            <person name="Howarth S."/>
            <person name="Huang C.-H."/>
            <person name="Kieser T."/>
            <person name="Larke L."/>
            <person name="Murphy L.D."/>
            <person name="Oliver K."/>
            <person name="O'Neil S."/>
            <person name="Rabbinowitsch E."/>
            <person name="Rajandream M.A."/>
            <person name="Rutherford K.M."/>
            <person name="Rutter S."/>
            <person name="Seeger K."/>
            <person name="Saunders D."/>
            <person name="Sharp S."/>
            <person name="Squares R."/>
            <person name="Squares S."/>
            <person name="Taylor K."/>
            <person name="Warren T."/>
            <person name="Wietzorrek A."/>
            <person name="Woodward J.R."/>
            <person name="Barrell B.G."/>
            <person name="Parkhill J."/>
            <person name="Hopwood D.A."/>
        </authorList>
    </citation>
    <scope>NUCLEOTIDE SEQUENCE [LARGE SCALE GENOMIC DNA]</scope>
    <source>
        <strain>ATCC BAA-471 / A3(2) / M145</strain>
    </source>
</reference>
<name>SAHH_STRCO</name>
<organism>
    <name type="scientific">Streptomyces coelicolor (strain ATCC BAA-471 / A3(2) / M145)</name>
    <dbReference type="NCBI Taxonomy" id="100226"/>
    <lineage>
        <taxon>Bacteria</taxon>
        <taxon>Bacillati</taxon>
        <taxon>Actinomycetota</taxon>
        <taxon>Actinomycetes</taxon>
        <taxon>Kitasatosporales</taxon>
        <taxon>Streptomycetaceae</taxon>
        <taxon>Streptomyces</taxon>
        <taxon>Streptomyces albidoflavus group</taxon>
    </lineage>
</organism>
<evidence type="ECO:0000255" key="1">
    <source>
        <dbReference type="HAMAP-Rule" id="MF_00563"/>
    </source>
</evidence>
<dbReference type="EC" id="3.13.2.1" evidence="1"/>
<dbReference type="EMBL" id="AL939114">
    <property type="protein sequence ID" value="CAB88907.1"/>
    <property type="molecule type" value="Genomic_DNA"/>
</dbReference>
<dbReference type="RefSeq" id="NP_627245.1">
    <property type="nucleotide sequence ID" value="NC_003888.3"/>
</dbReference>
<dbReference type="RefSeq" id="WP_003975788.1">
    <property type="nucleotide sequence ID" value="NZ_VNID01000013.1"/>
</dbReference>
<dbReference type="SMR" id="Q9KZM1"/>
<dbReference type="FunCoup" id="Q9KZM1">
    <property type="interactions" value="399"/>
</dbReference>
<dbReference type="STRING" id="100226.gene:17760638"/>
<dbReference type="PaxDb" id="100226-SCO3023"/>
<dbReference type="GeneID" id="96650116"/>
<dbReference type="KEGG" id="sco:SCO3023"/>
<dbReference type="PATRIC" id="fig|100226.15.peg.3083"/>
<dbReference type="eggNOG" id="COG0499">
    <property type="taxonomic scope" value="Bacteria"/>
</dbReference>
<dbReference type="HOGENOM" id="CLU_025194_2_1_11"/>
<dbReference type="InParanoid" id="Q9KZM1"/>
<dbReference type="OrthoDB" id="9802717at2"/>
<dbReference type="PhylomeDB" id="Q9KZM1"/>
<dbReference type="UniPathway" id="UPA00314">
    <property type="reaction ID" value="UER00076"/>
</dbReference>
<dbReference type="Proteomes" id="UP000001973">
    <property type="component" value="Chromosome"/>
</dbReference>
<dbReference type="GO" id="GO:0005829">
    <property type="term" value="C:cytosol"/>
    <property type="evidence" value="ECO:0000318"/>
    <property type="project" value="GO_Central"/>
</dbReference>
<dbReference type="GO" id="GO:0004013">
    <property type="term" value="F:adenosylhomocysteinase activity"/>
    <property type="evidence" value="ECO:0000318"/>
    <property type="project" value="GO_Central"/>
</dbReference>
<dbReference type="GO" id="GO:0071269">
    <property type="term" value="P:L-homocysteine biosynthetic process"/>
    <property type="evidence" value="ECO:0007669"/>
    <property type="project" value="UniProtKB-UniRule"/>
</dbReference>
<dbReference type="GO" id="GO:0006730">
    <property type="term" value="P:one-carbon metabolic process"/>
    <property type="evidence" value="ECO:0007669"/>
    <property type="project" value="UniProtKB-KW"/>
</dbReference>
<dbReference type="GO" id="GO:0033353">
    <property type="term" value="P:S-adenosylmethionine cycle"/>
    <property type="evidence" value="ECO:0000318"/>
    <property type="project" value="GO_Central"/>
</dbReference>
<dbReference type="CDD" id="cd00401">
    <property type="entry name" value="SAHH"/>
    <property type="match status" value="1"/>
</dbReference>
<dbReference type="FunFam" id="3.40.50.720:FF:000004">
    <property type="entry name" value="Adenosylhomocysteinase"/>
    <property type="match status" value="1"/>
</dbReference>
<dbReference type="Gene3D" id="3.40.50.1480">
    <property type="entry name" value="Adenosylhomocysteinase-like"/>
    <property type="match status" value="1"/>
</dbReference>
<dbReference type="Gene3D" id="3.40.50.720">
    <property type="entry name" value="NAD(P)-binding Rossmann-like Domain"/>
    <property type="match status" value="1"/>
</dbReference>
<dbReference type="HAMAP" id="MF_00563">
    <property type="entry name" value="AdoHcyase"/>
    <property type="match status" value="1"/>
</dbReference>
<dbReference type="InterPro" id="IPR042172">
    <property type="entry name" value="Adenosylhomocyst_ase-like_sf"/>
</dbReference>
<dbReference type="InterPro" id="IPR000043">
    <property type="entry name" value="Adenosylhomocysteinase-like"/>
</dbReference>
<dbReference type="InterPro" id="IPR015878">
    <property type="entry name" value="Ado_hCys_hydrolase_NAD-bd"/>
</dbReference>
<dbReference type="InterPro" id="IPR036291">
    <property type="entry name" value="NAD(P)-bd_dom_sf"/>
</dbReference>
<dbReference type="InterPro" id="IPR020082">
    <property type="entry name" value="S-Ado-L-homoCys_hydrolase_CS"/>
</dbReference>
<dbReference type="NCBIfam" id="TIGR00936">
    <property type="entry name" value="ahcY"/>
    <property type="match status" value="1"/>
</dbReference>
<dbReference type="NCBIfam" id="NF004005">
    <property type="entry name" value="PRK05476.2-3"/>
    <property type="match status" value="1"/>
</dbReference>
<dbReference type="PANTHER" id="PTHR23420">
    <property type="entry name" value="ADENOSYLHOMOCYSTEINASE"/>
    <property type="match status" value="1"/>
</dbReference>
<dbReference type="PANTHER" id="PTHR23420:SF0">
    <property type="entry name" value="ADENOSYLHOMOCYSTEINASE"/>
    <property type="match status" value="1"/>
</dbReference>
<dbReference type="Pfam" id="PF05221">
    <property type="entry name" value="AdoHcyase"/>
    <property type="match status" value="1"/>
</dbReference>
<dbReference type="Pfam" id="PF00670">
    <property type="entry name" value="AdoHcyase_NAD"/>
    <property type="match status" value="1"/>
</dbReference>
<dbReference type="PIRSF" id="PIRSF001109">
    <property type="entry name" value="Ad_hcy_hydrolase"/>
    <property type="match status" value="1"/>
</dbReference>
<dbReference type="SMART" id="SM00996">
    <property type="entry name" value="AdoHcyase"/>
    <property type="match status" value="1"/>
</dbReference>
<dbReference type="SMART" id="SM00997">
    <property type="entry name" value="AdoHcyase_NAD"/>
    <property type="match status" value="1"/>
</dbReference>
<dbReference type="SUPFAM" id="SSF52283">
    <property type="entry name" value="Formate/glycerate dehydrogenase catalytic domain-like"/>
    <property type="match status" value="1"/>
</dbReference>
<dbReference type="SUPFAM" id="SSF51735">
    <property type="entry name" value="NAD(P)-binding Rossmann-fold domains"/>
    <property type="match status" value="1"/>
</dbReference>
<dbReference type="PROSITE" id="PS00738">
    <property type="entry name" value="ADOHCYASE_1"/>
    <property type="match status" value="1"/>
</dbReference>
<dbReference type="PROSITE" id="PS00739">
    <property type="entry name" value="ADOHCYASE_2"/>
    <property type="match status" value="1"/>
</dbReference>
<accession>Q9KZM1</accession>
<keyword id="KW-0963">Cytoplasm</keyword>
<keyword id="KW-0378">Hydrolase</keyword>
<keyword id="KW-0520">NAD</keyword>
<keyword id="KW-0554">One-carbon metabolism</keyword>
<keyword id="KW-1185">Reference proteome</keyword>
<proteinExistence type="inferred from homology"/>
<feature type="chain" id="PRO_0000116990" description="Adenosylhomocysteinase">
    <location>
        <begin position="1"/>
        <end position="485"/>
    </location>
</feature>
<feature type="binding site" evidence="1">
    <location>
        <position position="60"/>
    </location>
    <ligand>
        <name>substrate</name>
    </ligand>
</feature>
<feature type="binding site" evidence="1">
    <location>
        <position position="146"/>
    </location>
    <ligand>
        <name>substrate</name>
    </ligand>
</feature>
<feature type="binding site" evidence="1">
    <location>
        <position position="208"/>
    </location>
    <ligand>
        <name>substrate</name>
    </ligand>
</feature>
<feature type="binding site" evidence="1">
    <location>
        <begin position="209"/>
        <end position="211"/>
    </location>
    <ligand>
        <name>NAD(+)</name>
        <dbReference type="ChEBI" id="CHEBI:57540"/>
    </ligand>
</feature>
<feature type="binding site" evidence="1">
    <location>
        <position position="238"/>
    </location>
    <ligand>
        <name>substrate</name>
    </ligand>
</feature>
<feature type="binding site" evidence="1">
    <location>
        <position position="242"/>
    </location>
    <ligand>
        <name>substrate</name>
    </ligand>
</feature>
<feature type="binding site" evidence="1">
    <location>
        <position position="243"/>
    </location>
    <ligand>
        <name>NAD(+)</name>
        <dbReference type="ChEBI" id="CHEBI:57540"/>
    </ligand>
</feature>
<feature type="binding site" evidence="1">
    <location>
        <begin position="272"/>
        <end position="277"/>
    </location>
    <ligand>
        <name>NAD(+)</name>
        <dbReference type="ChEBI" id="CHEBI:57540"/>
    </ligand>
</feature>
<feature type="binding site" evidence="1">
    <location>
        <position position="295"/>
    </location>
    <ligand>
        <name>NAD(+)</name>
        <dbReference type="ChEBI" id="CHEBI:57540"/>
    </ligand>
</feature>
<feature type="binding site" evidence="1">
    <location>
        <position position="330"/>
    </location>
    <ligand>
        <name>NAD(+)</name>
        <dbReference type="ChEBI" id="CHEBI:57540"/>
    </ligand>
</feature>
<feature type="binding site" evidence="1">
    <location>
        <begin position="351"/>
        <end position="353"/>
    </location>
    <ligand>
        <name>NAD(+)</name>
        <dbReference type="ChEBI" id="CHEBI:57540"/>
    </ligand>
</feature>
<feature type="binding site" evidence="1">
    <location>
        <position position="399"/>
    </location>
    <ligand>
        <name>NAD(+)</name>
        <dbReference type="ChEBI" id="CHEBI:57540"/>
    </ligand>
</feature>
<comment type="function">
    <text evidence="1">May play a key role in the regulation of the intracellular concentration of adenosylhomocysteine.</text>
</comment>
<comment type="catalytic activity">
    <reaction evidence="1">
        <text>S-adenosyl-L-homocysteine + H2O = L-homocysteine + adenosine</text>
        <dbReference type="Rhea" id="RHEA:21708"/>
        <dbReference type="ChEBI" id="CHEBI:15377"/>
        <dbReference type="ChEBI" id="CHEBI:16335"/>
        <dbReference type="ChEBI" id="CHEBI:57856"/>
        <dbReference type="ChEBI" id="CHEBI:58199"/>
        <dbReference type="EC" id="3.13.2.1"/>
    </reaction>
</comment>
<comment type="cofactor">
    <cofactor evidence="1">
        <name>NAD(+)</name>
        <dbReference type="ChEBI" id="CHEBI:57540"/>
    </cofactor>
    <text evidence="1">Binds 1 NAD(+) per subunit.</text>
</comment>
<comment type="pathway">
    <text evidence="1">Amino-acid biosynthesis; L-homocysteine biosynthesis; L-homocysteine from S-adenosyl-L-homocysteine: step 1/1.</text>
</comment>
<comment type="subcellular location">
    <subcellularLocation>
        <location evidence="1">Cytoplasm</location>
    </subcellularLocation>
</comment>
<comment type="similarity">
    <text evidence="1">Belongs to the adenosylhomocysteinase family.</text>
</comment>
<sequence length="485" mass="52940">MTTVDNRQDFKVADLSLAAFGRKEITLAEHEMPGLMAIRKEYAEAQPLAGARVTGSLHMTVQTAVLIETLVALGAEVRWASCNIFSTQDHAAAAIAVGPNGTPDNPQGVPVFAWKGETLEEYWWCTEQALTWPNTPTGGPNMILDDGGDATLLVHKGVEYEKDGKVPSVDTAESDEHRVILELLTRTVGESPQKWTQLASEIRGVTEETTTGVHRLYEMHRDGTLLFPAINVNDAVTKSKFDNKYGCRHSLIDGINRATDVLIGGKTAVVCGYGDVGKGCAESLRGQGARVIITEIDPICALQAAMDGFQVTTLDEVVDKADIFVTTTGNKDIIMAKDMAKMKHQAIVGNIGHFDNEIDMAGLAQTPGIVKDEVKPQVHTWTYPDGKVLIVLSEGRLLNLGNATGHPSFVMSNSFADQTLAQIELFTKPDEYPTDVYVLPKHLDEKVARLHLDSLGVKLTTLRPEQADYIGVKVEGPYKADHYRY</sequence>
<gene>
    <name evidence="1" type="primary">ahcY</name>
    <name type="synonym">sahH</name>
    <name type="ordered locus">SCO3023</name>
    <name type="ORF">SCE34.04c</name>
</gene>